<protein>
    <recommendedName>
        <fullName evidence="1">Bifunctional protein FolD</fullName>
    </recommendedName>
    <domain>
        <recommendedName>
            <fullName evidence="1">Methylenetetrahydrofolate dehydrogenase</fullName>
            <ecNumber evidence="1">1.5.1.5</ecNumber>
        </recommendedName>
    </domain>
    <domain>
        <recommendedName>
            <fullName evidence="1">Methenyltetrahydrofolate cyclohydrolase</fullName>
            <ecNumber evidence="1">3.5.4.9</ecNumber>
        </recommendedName>
    </domain>
</protein>
<evidence type="ECO:0000255" key="1">
    <source>
        <dbReference type="HAMAP-Rule" id="MF_01576"/>
    </source>
</evidence>
<comment type="function">
    <text evidence="1">Catalyzes the oxidation of 5,10-methylenetetrahydrofolate to 5,10-methenyltetrahydrofolate and then the hydrolysis of 5,10-methenyltetrahydrofolate to 10-formyltetrahydrofolate.</text>
</comment>
<comment type="catalytic activity">
    <reaction evidence="1">
        <text>(6R)-5,10-methylene-5,6,7,8-tetrahydrofolate + NADP(+) = (6R)-5,10-methenyltetrahydrofolate + NADPH</text>
        <dbReference type="Rhea" id="RHEA:22812"/>
        <dbReference type="ChEBI" id="CHEBI:15636"/>
        <dbReference type="ChEBI" id="CHEBI:57455"/>
        <dbReference type="ChEBI" id="CHEBI:57783"/>
        <dbReference type="ChEBI" id="CHEBI:58349"/>
        <dbReference type="EC" id="1.5.1.5"/>
    </reaction>
</comment>
<comment type="catalytic activity">
    <reaction evidence="1">
        <text>(6R)-5,10-methenyltetrahydrofolate + H2O = (6R)-10-formyltetrahydrofolate + H(+)</text>
        <dbReference type="Rhea" id="RHEA:23700"/>
        <dbReference type="ChEBI" id="CHEBI:15377"/>
        <dbReference type="ChEBI" id="CHEBI:15378"/>
        <dbReference type="ChEBI" id="CHEBI:57455"/>
        <dbReference type="ChEBI" id="CHEBI:195366"/>
        <dbReference type="EC" id="3.5.4.9"/>
    </reaction>
</comment>
<comment type="pathway">
    <text evidence="1">One-carbon metabolism; tetrahydrofolate interconversion.</text>
</comment>
<comment type="subunit">
    <text evidence="1">Homodimer.</text>
</comment>
<comment type="similarity">
    <text evidence="1">Belongs to the tetrahydrofolate dehydrogenase/cyclohydrolase family.</text>
</comment>
<accession>Q3BSP5</accession>
<organism>
    <name type="scientific">Xanthomonas euvesicatoria pv. vesicatoria (strain 85-10)</name>
    <name type="common">Xanthomonas campestris pv. vesicatoria</name>
    <dbReference type="NCBI Taxonomy" id="316273"/>
    <lineage>
        <taxon>Bacteria</taxon>
        <taxon>Pseudomonadati</taxon>
        <taxon>Pseudomonadota</taxon>
        <taxon>Gammaproteobacteria</taxon>
        <taxon>Lysobacterales</taxon>
        <taxon>Lysobacteraceae</taxon>
        <taxon>Xanthomonas</taxon>
    </lineage>
</organism>
<sequence length="303" mass="31629">MTASAPAASASARLLDGRRIAEELLDGLKLRVDARLAAGKARPGLAVVLVGGDPASSVYVRNKRRAAEKVGIEAFDYDLPQGTSEAQLASLIDELNADPKIHGILIQLPLPGIPDANRLIQRIDPRKDVDGFHPQNVGHLALREFGLRPCTPRGIVTLLGHTDQPVRGRNATIVGVSNHVGRPMGLELLIAGCTVTSCHKFTPPDVLEASVRNADILVVAVGRPGLIPGEWVKPGAVVIDVGINRLDDGRLVGDVGFDAAAQRAAWITPVPGGVGPMTVATLMQNTIEAADAAESGDSGLGIG</sequence>
<gene>
    <name evidence="1" type="primary">folD</name>
    <name type="ordered locus">XCV2487</name>
</gene>
<dbReference type="EC" id="1.5.1.5" evidence="1"/>
<dbReference type="EC" id="3.5.4.9" evidence="1"/>
<dbReference type="EMBL" id="AM039952">
    <property type="protein sequence ID" value="CAJ24164.1"/>
    <property type="molecule type" value="Genomic_DNA"/>
</dbReference>
<dbReference type="RefSeq" id="WP_011347659.1">
    <property type="nucleotide sequence ID" value="NZ_CP017190.1"/>
</dbReference>
<dbReference type="SMR" id="Q3BSP5"/>
<dbReference type="STRING" id="456327.BJD11_10465"/>
<dbReference type="KEGG" id="xcv:XCV2487"/>
<dbReference type="eggNOG" id="COG0190">
    <property type="taxonomic scope" value="Bacteria"/>
</dbReference>
<dbReference type="HOGENOM" id="CLU_034045_2_1_6"/>
<dbReference type="UniPathway" id="UPA00193"/>
<dbReference type="Proteomes" id="UP000007069">
    <property type="component" value="Chromosome"/>
</dbReference>
<dbReference type="GO" id="GO:0005829">
    <property type="term" value="C:cytosol"/>
    <property type="evidence" value="ECO:0007669"/>
    <property type="project" value="TreeGrafter"/>
</dbReference>
<dbReference type="GO" id="GO:0004477">
    <property type="term" value="F:methenyltetrahydrofolate cyclohydrolase activity"/>
    <property type="evidence" value="ECO:0007669"/>
    <property type="project" value="UniProtKB-UniRule"/>
</dbReference>
<dbReference type="GO" id="GO:0004488">
    <property type="term" value="F:methylenetetrahydrofolate dehydrogenase (NADP+) activity"/>
    <property type="evidence" value="ECO:0007669"/>
    <property type="project" value="UniProtKB-UniRule"/>
</dbReference>
<dbReference type="GO" id="GO:0000105">
    <property type="term" value="P:L-histidine biosynthetic process"/>
    <property type="evidence" value="ECO:0007669"/>
    <property type="project" value="UniProtKB-KW"/>
</dbReference>
<dbReference type="GO" id="GO:0009086">
    <property type="term" value="P:methionine biosynthetic process"/>
    <property type="evidence" value="ECO:0007669"/>
    <property type="project" value="UniProtKB-KW"/>
</dbReference>
<dbReference type="GO" id="GO:0006164">
    <property type="term" value="P:purine nucleotide biosynthetic process"/>
    <property type="evidence" value="ECO:0007669"/>
    <property type="project" value="UniProtKB-KW"/>
</dbReference>
<dbReference type="GO" id="GO:0035999">
    <property type="term" value="P:tetrahydrofolate interconversion"/>
    <property type="evidence" value="ECO:0007669"/>
    <property type="project" value="UniProtKB-UniRule"/>
</dbReference>
<dbReference type="CDD" id="cd01080">
    <property type="entry name" value="NAD_bind_m-THF_DH_Cyclohyd"/>
    <property type="match status" value="1"/>
</dbReference>
<dbReference type="FunFam" id="3.40.50.720:FF:000006">
    <property type="entry name" value="Bifunctional protein FolD"/>
    <property type="match status" value="1"/>
</dbReference>
<dbReference type="FunFam" id="3.40.50.10860:FF:000005">
    <property type="entry name" value="C-1-tetrahydrofolate synthase, cytoplasmic, putative"/>
    <property type="match status" value="1"/>
</dbReference>
<dbReference type="Gene3D" id="3.40.50.10860">
    <property type="entry name" value="Leucine Dehydrogenase, chain A, domain 1"/>
    <property type="match status" value="1"/>
</dbReference>
<dbReference type="Gene3D" id="3.40.50.720">
    <property type="entry name" value="NAD(P)-binding Rossmann-like Domain"/>
    <property type="match status" value="1"/>
</dbReference>
<dbReference type="HAMAP" id="MF_01576">
    <property type="entry name" value="THF_DHG_CYH"/>
    <property type="match status" value="1"/>
</dbReference>
<dbReference type="InterPro" id="IPR046346">
    <property type="entry name" value="Aminoacid_DH-like_N_sf"/>
</dbReference>
<dbReference type="InterPro" id="IPR036291">
    <property type="entry name" value="NAD(P)-bd_dom_sf"/>
</dbReference>
<dbReference type="InterPro" id="IPR000672">
    <property type="entry name" value="THF_DH/CycHdrlase"/>
</dbReference>
<dbReference type="InterPro" id="IPR020630">
    <property type="entry name" value="THF_DH/CycHdrlase_cat_dom"/>
</dbReference>
<dbReference type="InterPro" id="IPR020867">
    <property type="entry name" value="THF_DH/CycHdrlase_CS"/>
</dbReference>
<dbReference type="InterPro" id="IPR020631">
    <property type="entry name" value="THF_DH/CycHdrlase_NAD-bd_dom"/>
</dbReference>
<dbReference type="NCBIfam" id="NF008058">
    <property type="entry name" value="PRK10792.1"/>
    <property type="match status" value="1"/>
</dbReference>
<dbReference type="PANTHER" id="PTHR48099:SF5">
    <property type="entry name" value="C-1-TETRAHYDROFOLATE SYNTHASE, CYTOPLASMIC"/>
    <property type="match status" value="1"/>
</dbReference>
<dbReference type="PANTHER" id="PTHR48099">
    <property type="entry name" value="C-1-TETRAHYDROFOLATE SYNTHASE, CYTOPLASMIC-RELATED"/>
    <property type="match status" value="1"/>
</dbReference>
<dbReference type="Pfam" id="PF00763">
    <property type="entry name" value="THF_DHG_CYH"/>
    <property type="match status" value="1"/>
</dbReference>
<dbReference type="Pfam" id="PF02882">
    <property type="entry name" value="THF_DHG_CYH_C"/>
    <property type="match status" value="1"/>
</dbReference>
<dbReference type="PRINTS" id="PR00085">
    <property type="entry name" value="THFDHDRGNASE"/>
</dbReference>
<dbReference type="SUPFAM" id="SSF53223">
    <property type="entry name" value="Aminoacid dehydrogenase-like, N-terminal domain"/>
    <property type="match status" value="1"/>
</dbReference>
<dbReference type="SUPFAM" id="SSF51735">
    <property type="entry name" value="NAD(P)-binding Rossmann-fold domains"/>
    <property type="match status" value="1"/>
</dbReference>
<dbReference type="PROSITE" id="PS00767">
    <property type="entry name" value="THF_DHG_CYH_2"/>
    <property type="match status" value="1"/>
</dbReference>
<name>FOLD_XANE5</name>
<proteinExistence type="inferred from homology"/>
<feature type="chain" id="PRO_0000268568" description="Bifunctional protein FolD">
    <location>
        <begin position="1"/>
        <end position="303"/>
    </location>
</feature>
<feature type="binding site" evidence="1">
    <location>
        <begin position="175"/>
        <end position="177"/>
    </location>
    <ligand>
        <name>NADP(+)</name>
        <dbReference type="ChEBI" id="CHEBI:58349"/>
    </ligand>
</feature>
<feature type="binding site" evidence="1">
    <location>
        <position position="243"/>
    </location>
    <ligand>
        <name>NADP(+)</name>
        <dbReference type="ChEBI" id="CHEBI:58349"/>
    </ligand>
</feature>
<keyword id="KW-0028">Amino-acid biosynthesis</keyword>
<keyword id="KW-0368">Histidine biosynthesis</keyword>
<keyword id="KW-0378">Hydrolase</keyword>
<keyword id="KW-0486">Methionine biosynthesis</keyword>
<keyword id="KW-0511">Multifunctional enzyme</keyword>
<keyword id="KW-0521">NADP</keyword>
<keyword id="KW-0554">One-carbon metabolism</keyword>
<keyword id="KW-0560">Oxidoreductase</keyword>
<keyword id="KW-0658">Purine biosynthesis</keyword>
<reference key="1">
    <citation type="journal article" date="2005" name="J. Bacteriol.">
        <title>Insights into genome plasticity and pathogenicity of the plant pathogenic Bacterium Xanthomonas campestris pv. vesicatoria revealed by the complete genome sequence.</title>
        <authorList>
            <person name="Thieme F."/>
            <person name="Koebnik R."/>
            <person name="Bekel T."/>
            <person name="Berger C."/>
            <person name="Boch J."/>
            <person name="Buettner D."/>
            <person name="Caldana C."/>
            <person name="Gaigalat L."/>
            <person name="Goesmann A."/>
            <person name="Kay S."/>
            <person name="Kirchner O."/>
            <person name="Lanz C."/>
            <person name="Linke B."/>
            <person name="McHardy A.C."/>
            <person name="Meyer F."/>
            <person name="Mittenhuber G."/>
            <person name="Nies D.H."/>
            <person name="Niesbach-Kloesgen U."/>
            <person name="Patschkowski T."/>
            <person name="Rueckert C."/>
            <person name="Rupp O."/>
            <person name="Schneiker S."/>
            <person name="Schuster S.C."/>
            <person name="Vorhoelter F.J."/>
            <person name="Weber E."/>
            <person name="Puehler A."/>
            <person name="Bonas U."/>
            <person name="Bartels D."/>
            <person name="Kaiser O."/>
        </authorList>
    </citation>
    <scope>NUCLEOTIDE SEQUENCE [LARGE SCALE GENOMIC DNA]</scope>
    <source>
        <strain>85-10</strain>
    </source>
</reference>